<protein>
    <recommendedName>
        <fullName evidence="1">Cobyric acid synthase</fullName>
    </recommendedName>
</protein>
<organism>
    <name type="scientific">Clostridium perfringens (strain 13 / Type A)</name>
    <dbReference type="NCBI Taxonomy" id="195102"/>
    <lineage>
        <taxon>Bacteria</taxon>
        <taxon>Bacillati</taxon>
        <taxon>Bacillota</taxon>
        <taxon>Clostridia</taxon>
        <taxon>Eubacteriales</taxon>
        <taxon>Clostridiaceae</taxon>
        <taxon>Clostridium</taxon>
    </lineage>
</organism>
<accession>Q8XLJ6</accession>
<proteinExistence type="inferred from homology"/>
<dbReference type="EMBL" id="BA000016">
    <property type="protein sequence ID" value="BAB80751.1"/>
    <property type="molecule type" value="Genomic_DNA"/>
</dbReference>
<dbReference type="RefSeq" id="WP_011010197.1">
    <property type="nucleotide sequence ID" value="NC_003366.1"/>
</dbReference>
<dbReference type="SMR" id="Q8XLJ6"/>
<dbReference type="STRING" id="195102.gene:10490308"/>
<dbReference type="KEGG" id="cpe:CPE1045"/>
<dbReference type="HOGENOM" id="CLU_019250_2_2_9"/>
<dbReference type="UniPathway" id="UPA00148"/>
<dbReference type="Proteomes" id="UP000000818">
    <property type="component" value="Chromosome"/>
</dbReference>
<dbReference type="GO" id="GO:0015420">
    <property type="term" value="F:ABC-type vitamin B12 transporter activity"/>
    <property type="evidence" value="ECO:0007669"/>
    <property type="project" value="UniProtKB-UniRule"/>
</dbReference>
<dbReference type="GO" id="GO:0003824">
    <property type="term" value="F:catalytic activity"/>
    <property type="evidence" value="ECO:0007669"/>
    <property type="project" value="InterPro"/>
</dbReference>
<dbReference type="GO" id="GO:0009236">
    <property type="term" value="P:cobalamin biosynthetic process"/>
    <property type="evidence" value="ECO:0007669"/>
    <property type="project" value="UniProtKB-UniRule"/>
</dbReference>
<dbReference type="CDD" id="cd05389">
    <property type="entry name" value="CobQ_N"/>
    <property type="match status" value="1"/>
</dbReference>
<dbReference type="CDD" id="cd01750">
    <property type="entry name" value="GATase1_CobQ"/>
    <property type="match status" value="1"/>
</dbReference>
<dbReference type="Gene3D" id="3.40.50.880">
    <property type="match status" value="1"/>
</dbReference>
<dbReference type="Gene3D" id="3.40.50.300">
    <property type="entry name" value="P-loop containing nucleotide triphosphate hydrolases"/>
    <property type="match status" value="1"/>
</dbReference>
<dbReference type="HAMAP" id="MF_00028">
    <property type="entry name" value="CobQ"/>
    <property type="match status" value="1"/>
</dbReference>
<dbReference type="InterPro" id="IPR029062">
    <property type="entry name" value="Class_I_gatase-like"/>
</dbReference>
<dbReference type="InterPro" id="IPR002586">
    <property type="entry name" value="CobQ/CobB/MinD/ParA_Nub-bd_dom"/>
</dbReference>
<dbReference type="InterPro" id="IPR033949">
    <property type="entry name" value="CobQ_GATase1"/>
</dbReference>
<dbReference type="InterPro" id="IPR047045">
    <property type="entry name" value="CobQ_N"/>
</dbReference>
<dbReference type="InterPro" id="IPR004459">
    <property type="entry name" value="CobQ_synth"/>
</dbReference>
<dbReference type="InterPro" id="IPR011698">
    <property type="entry name" value="GATase_3"/>
</dbReference>
<dbReference type="InterPro" id="IPR027417">
    <property type="entry name" value="P-loop_NTPase"/>
</dbReference>
<dbReference type="NCBIfam" id="TIGR00313">
    <property type="entry name" value="cobQ"/>
    <property type="match status" value="1"/>
</dbReference>
<dbReference type="NCBIfam" id="NF001989">
    <property type="entry name" value="PRK00784.1"/>
    <property type="match status" value="1"/>
</dbReference>
<dbReference type="PANTHER" id="PTHR21343:SF1">
    <property type="entry name" value="COBYRIC ACID SYNTHASE"/>
    <property type="match status" value="1"/>
</dbReference>
<dbReference type="PANTHER" id="PTHR21343">
    <property type="entry name" value="DETHIOBIOTIN SYNTHETASE"/>
    <property type="match status" value="1"/>
</dbReference>
<dbReference type="Pfam" id="PF01656">
    <property type="entry name" value="CbiA"/>
    <property type="match status" value="1"/>
</dbReference>
<dbReference type="Pfam" id="PF07685">
    <property type="entry name" value="GATase_3"/>
    <property type="match status" value="1"/>
</dbReference>
<dbReference type="SUPFAM" id="SSF52317">
    <property type="entry name" value="Class I glutamine amidotransferase-like"/>
    <property type="match status" value="1"/>
</dbReference>
<dbReference type="SUPFAM" id="SSF52540">
    <property type="entry name" value="P-loop containing nucleoside triphosphate hydrolases"/>
    <property type="match status" value="1"/>
</dbReference>
<dbReference type="PROSITE" id="PS51274">
    <property type="entry name" value="GATASE_COBBQ"/>
    <property type="match status" value="1"/>
</dbReference>
<keyword id="KW-0169">Cobalamin biosynthesis</keyword>
<keyword id="KW-0315">Glutamine amidotransferase</keyword>
<keyword id="KW-1185">Reference proteome</keyword>
<name>COBQ_CLOPE</name>
<evidence type="ECO:0000255" key="1">
    <source>
        <dbReference type="HAMAP-Rule" id="MF_00028"/>
    </source>
</evidence>
<gene>
    <name evidence="1" type="primary">cobQ</name>
    <name type="ordered locus">CPE1045</name>
</gene>
<reference key="1">
    <citation type="journal article" date="2002" name="Proc. Natl. Acad. Sci. U.S.A.">
        <title>Complete genome sequence of Clostridium perfringens, an anaerobic flesh-eater.</title>
        <authorList>
            <person name="Shimizu T."/>
            <person name="Ohtani K."/>
            <person name="Hirakawa H."/>
            <person name="Ohshima K."/>
            <person name="Yamashita A."/>
            <person name="Shiba T."/>
            <person name="Ogasawara N."/>
            <person name="Hattori M."/>
            <person name="Kuhara S."/>
            <person name="Hayashi H."/>
        </authorList>
    </citation>
    <scope>NUCLEOTIDE SEQUENCE [LARGE SCALE GENOMIC DNA]</scope>
    <source>
        <strain>13 / Type A</strain>
    </source>
</reference>
<sequence length="487" mass="54632">MKYKSIMLLGTASSVGKSTVAAAFCRYFKKKGYRVAPYKALNISLNSFVTKEGDEIGRAQVVQAEACEIDPKEYMNPILMKPSAGFKTQVIVRGKVHCTMDAYKYKELNKYLKEKAKEAYDDISNDYDLIVLEGSGSCAEINLRETDIANMHTAKIADADVILVADINRGGVFASIVGTIMLLTEEERKRVKGVIINKFRGKREFFEPAMRQIEEIIKIPVLGVMPYFDLDIEEEDSASIKLRKGNGKGIDIAIVRLPHMSNFTDFNSLGRIKDVGIRYAENPKDLENANMIIIPGSKNTIDDLIYLKESGFKEALINESSNGKLIFGICGGYQILGEKIIDSLGVEGDIREEEGLGLLNIVTSFNKEKTTKQVVAFDLEGNEVSGYEIHNGESVPTAKENIWIKEKNGNVLGMNNKEQNVFGTYIHGIFDEGDFGEKLINKLKKELNIEESNEVNYKDYKMSQYDKLCELLEENIDMAYVENLIRS</sequence>
<comment type="function">
    <text evidence="1">Catalyzes amidations at positions B, D, E, and G on adenosylcobyrinic A,C-diamide. NH(2) groups are provided by glutamine, and one molecule of ATP is hydrogenolyzed for each amidation.</text>
</comment>
<comment type="pathway">
    <text evidence="1">Cofactor biosynthesis; adenosylcobalamin biosynthesis.</text>
</comment>
<comment type="similarity">
    <text evidence="1">Belongs to the CobB/CobQ family. CobQ subfamily.</text>
</comment>
<feature type="chain" id="PRO_0000141297" description="Cobyric acid synthase">
    <location>
        <begin position="1"/>
        <end position="487"/>
    </location>
</feature>
<feature type="domain" description="GATase cobBQ-type" evidence="1">
    <location>
        <begin position="249"/>
        <end position="435"/>
    </location>
</feature>
<feature type="active site" description="Nucleophile" evidence="1">
    <location>
        <position position="330"/>
    </location>
</feature>
<feature type="active site" evidence="1">
    <location>
        <position position="427"/>
    </location>
</feature>